<evidence type="ECO:0000255" key="1">
    <source>
        <dbReference type="HAMAP-Rule" id="MF_00616"/>
    </source>
</evidence>
<name>ALLA_ECOL6</name>
<gene>
    <name evidence="1" type="primary">allA</name>
    <name type="ordered locus">c0620</name>
</gene>
<accession>Q8FK65</accession>
<keyword id="KW-0456">Lyase</keyword>
<keyword id="KW-0659">Purine metabolism</keyword>
<keyword id="KW-1185">Reference proteome</keyword>
<proteinExistence type="inferred from homology"/>
<reference key="1">
    <citation type="journal article" date="2002" name="Proc. Natl. Acad. Sci. U.S.A.">
        <title>Extensive mosaic structure revealed by the complete genome sequence of uropathogenic Escherichia coli.</title>
        <authorList>
            <person name="Welch R.A."/>
            <person name="Burland V."/>
            <person name="Plunkett G. III"/>
            <person name="Redford P."/>
            <person name="Roesch P."/>
            <person name="Rasko D."/>
            <person name="Buckles E.L."/>
            <person name="Liou S.-R."/>
            <person name="Boutin A."/>
            <person name="Hackett J."/>
            <person name="Stroud D."/>
            <person name="Mayhew G.F."/>
            <person name="Rose D.J."/>
            <person name="Zhou S."/>
            <person name="Schwartz D.C."/>
            <person name="Perna N.T."/>
            <person name="Mobley H.L.T."/>
            <person name="Donnenberg M.S."/>
            <person name="Blattner F.R."/>
        </authorList>
    </citation>
    <scope>NUCLEOTIDE SEQUENCE [LARGE SCALE GENOMIC DNA]</scope>
    <source>
        <strain>CFT073 / ATCC 700928 / UPEC</strain>
    </source>
</reference>
<feature type="chain" id="PRO_0000120548" description="Ureidoglycolate lyase">
    <location>
        <begin position="1"/>
        <end position="160"/>
    </location>
</feature>
<organism>
    <name type="scientific">Escherichia coli O6:H1 (strain CFT073 / ATCC 700928 / UPEC)</name>
    <dbReference type="NCBI Taxonomy" id="199310"/>
    <lineage>
        <taxon>Bacteria</taxon>
        <taxon>Pseudomonadati</taxon>
        <taxon>Pseudomonadota</taxon>
        <taxon>Gammaproteobacteria</taxon>
        <taxon>Enterobacterales</taxon>
        <taxon>Enterobacteriaceae</taxon>
        <taxon>Escherichia</taxon>
    </lineage>
</organism>
<sequence length="160" mass="18239">MKLQVLPLSQEAFCAYGDVIETQKRDFFHINNGLVERYHDLALVEILEQDRTLISINRAQPANLPLTIHELERHPLGTQAFIPMKGEVFVVVVALGDDKPDLSTLRAFITNGEQGVNYHRNVWHHPLFAWQRVTDFLTIDRGGSDNCDVESIPEQELCFA</sequence>
<dbReference type="EC" id="4.3.2.3" evidence="1"/>
<dbReference type="EMBL" id="AE014075">
    <property type="protein sequence ID" value="AAN79097.1"/>
    <property type="molecule type" value="Genomic_DNA"/>
</dbReference>
<dbReference type="RefSeq" id="WP_000776370.1">
    <property type="nucleotide sequence ID" value="NZ_CP051263.1"/>
</dbReference>
<dbReference type="SMR" id="Q8FK65"/>
<dbReference type="STRING" id="199310.c0620"/>
<dbReference type="KEGG" id="ecc:c0620"/>
<dbReference type="eggNOG" id="COG3194">
    <property type="taxonomic scope" value="Bacteria"/>
</dbReference>
<dbReference type="HOGENOM" id="CLU_070848_1_1_6"/>
<dbReference type="BioCyc" id="ECOL199310:C0620-MONOMER"/>
<dbReference type="UniPathway" id="UPA00395"/>
<dbReference type="Proteomes" id="UP000001410">
    <property type="component" value="Chromosome"/>
</dbReference>
<dbReference type="GO" id="GO:0004848">
    <property type="term" value="F:ureidoglycolate hydrolase activity"/>
    <property type="evidence" value="ECO:0007669"/>
    <property type="project" value="InterPro"/>
</dbReference>
<dbReference type="GO" id="GO:0050385">
    <property type="term" value="F:ureidoglycolate lyase activity"/>
    <property type="evidence" value="ECO:0007669"/>
    <property type="project" value="UniProtKB-UniRule"/>
</dbReference>
<dbReference type="GO" id="GO:0000256">
    <property type="term" value="P:allantoin catabolic process"/>
    <property type="evidence" value="ECO:0007669"/>
    <property type="project" value="UniProtKB-UniRule"/>
</dbReference>
<dbReference type="GO" id="GO:0006145">
    <property type="term" value="P:purine nucleobase catabolic process"/>
    <property type="evidence" value="ECO:0007669"/>
    <property type="project" value="UniProtKB-UniRule"/>
</dbReference>
<dbReference type="CDD" id="cd20298">
    <property type="entry name" value="cupin_UAH"/>
    <property type="match status" value="1"/>
</dbReference>
<dbReference type="FunFam" id="2.60.120.480:FF:000001">
    <property type="entry name" value="Ureidoglycolate lyase"/>
    <property type="match status" value="1"/>
</dbReference>
<dbReference type="Gene3D" id="2.60.120.480">
    <property type="entry name" value="Ureidoglycolate hydrolase"/>
    <property type="match status" value="1"/>
</dbReference>
<dbReference type="HAMAP" id="MF_00616">
    <property type="entry name" value="Ureidogly_lyase"/>
    <property type="match status" value="1"/>
</dbReference>
<dbReference type="InterPro" id="IPR011051">
    <property type="entry name" value="RmlC_Cupin_sf"/>
</dbReference>
<dbReference type="InterPro" id="IPR047233">
    <property type="entry name" value="UAH_cupin"/>
</dbReference>
<dbReference type="InterPro" id="IPR007247">
    <property type="entry name" value="Ureidogly_lyase"/>
</dbReference>
<dbReference type="InterPro" id="IPR023525">
    <property type="entry name" value="Ureidogly_lyase_bac"/>
</dbReference>
<dbReference type="InterPro" id="IPR024060">
    <property type="entry name" value="Ureidoglycolate_lyase_dom_sf"/>
</dbReference>
<dbReference type="NCBIfam" id="NF002948">
    <property type="entry name" value="PRK03606.1-1"/>
    <property type="match status" value="1"/>
</dbReference>
<dbReference type="NCBIfam" id="NF009932">
    <property type="entry name" value="PRK13395.1"/>
    <property type="match status" value="1"/>
</dbReference>
<dbReference type="PANTHER" id="PTHR21221">
    <property type="entry name" value="UREIDOGLYCOLATE HYDROLASE"/>
    <property type="match status" value="1"/>
</dbReference>
<dbReference type="PANTHER" id="PTHR21221:SF1">
    <property type="entry name" value="UREIDOGLYCOLATE LYASE"/>
    <property type="match status" value="1"/>
</dbReference>
<dbReference type="Pfam" id="PF04115">
    <property type="entry name" value="Ureidogly_lyase"/>
    <property type="match status" value="1"/>
</dbReference>
<dbReference type="PIRSF" id="PIRSF017306">
    <property type="entry name" value="Ureidogly_hydro"/>
    <property type="match status" value="1"/>
</dbReference>
<dbReference type="SUPFAM" id="SSF51182">
    <property type="entry name" value="RmlC-like cupins"/>
    <property type="match status" value="1"/>
</dbReference>
<comment type="function">
    <text evidence="1">Catalyzes the catabolism of the allantoin degradation intermediate (S)-ureidoglycolate, generating urea and glyoxylate. Involved in the anaerobic utilization of allantoin as sole nitrogen source. Reinforces the induction of genes involved in the degradation of allantoin and glyoxylate by producing glyoxylate.</text>
</comment>
<comment type="catalytic activity">
    <reaction evidence="1">
        <text>(S)-ureidoglycolate = urea + glyoxylate</text>
        <dbReference type="Rhea" id="RHEA:11304"/>
        <dbReference type="ChEBI" id="CHEBI:16199"/>
        <dbReference type="ChEBI" id="CHEBI:36655"/>
        <dbReference type="ChEBI" id="CHEBI:57296"/>
        <dbReference type="EC" id="4.3.2.3"/>
    </reaction>
</comment>
<comment type="cofactor">
    <cofactor evidence="1">
        <name>Ni(2+)</name>
        <dbReference type="ChEBI" id="CHEBI:49786"/>
    </cofactor>
</comment>
<comment type="pathway">
    <text evidence="1">Nitrogen metabolism; (S)-allantoin degradation.</text>
</comment>
<comment type="subunit">
    <text evidence="1">Homodimer.</text>
</comment>
<comment type="similarity">
    <text evidence="1">Belongs to the ureidoglycolate lyase family.</text>
</comment>
<protein>
    <recommendedName>
        <fullName evidence="1">Ureidoglycolate lyase</fullName>
        <ecNumber evidence="1">4.3.2.3</ecNumber>
    </recommendedName>
    <alternativeName>
        <fullName evidence="1">Ureidoglycolatase</fullName>
    </alternativeName>
</protein>